<accession>Q75BT9</accession>
<name>GLNA_EREGS</name>
<comment type="catalytic activity">
    <reaction>
        <text>L-glutamate + NH4(+) + ATP = L-glutamine + ADP + phosphate + H(+)</text>
        <dbReference type="Rhea" id="RHEA:16169"/>
        <dbReference type="ChEBI" id="CHEBI:15378"/>
        <dbReference type="ChEBI" id="CHEBI:28938"/>
        <dbReference type="ChEBI" id="CHEBI:29985"/>
        <dbReference type="ChEBI" id="CHEBI:30616"/>
        <dbReference type="ChEBI" id="CHEBI:43474"/>
        <dbReference type="ChEBI" id="CHEBI:58359"/>
        <dbReference type="ChEBI" id="CHEBI:456216"/>
        <dbReference type="EC" id="6.3.1.2"/>
    </reaction>
</comment>
<comment type="subunit">
    <text evidence="1">Homooctamer.</text>
</comment>
<comment type="subcellular location">
    <subcellularLocation>
        <location>Cytoplasm</location>
    </subcellularLocation>
</comment>
<comment type="similarity">
    <text evidence="4">Belongs to the glutamine synthetase family.</text>
</comment>
<proteinExistence type="inferred from homology"/>
<dbReference type="EC" id="6.3.1.2"/>
<dbReference type="EMBL" id="AE016816">
    <property type="protein sequence ID" value="AAS51408.1"/>
    <property type="molecule type" value="Genomic_DNA"/>
</dbReference>
<dbReference type="RefSeq" id="NP_983584.1">
    <property type="nucleotide sequence ID" value="NM_208937.1"/>
</dbReference>
<dbReference type="SMR" id="Q75BT9"/>
<dbReference type="FunCoup" id="Q75BT9">
    <property type="interactions" value="828"/>
</dbReference>
<dbReference type="STRING" id="284811.Q75BT9"/>
<dbReference type="EnsemblFungi" id="AAS51408">
    <property type="protein sequence ID" value="AAS51408"/>
    <property type="gene ID" value="AGOS_ACR182C"/>
</dbReference>
<dbReference type="GeneID" id="4619716"/>
<dbReference type="KEGG" id="ago:AGOS_ACR182C"/>
<dbReference type="eggNOG" id="KOG0683">
    <property type="taxonomic scope" value="Eukaryota"/>
</dbReference>
<dbReference type="HOGENOM" id="CLU_036762_1_1_1"/>
<dbReference type="InParanoid" id="Q75BT9"/>
<dbReference type="OMA" id="DRRPNAN"/>
<dbReference type="OrthoDB" id="1936100at2759"/>
<dbReference type="Proteomes" id="UP000000591">
    <property type="component" value="Chromosome III"/>
</dbReference>
<dbReference type="GO" id="GO:0005737">
    <property type="term" value="C:cytoplasm"/>
    <property type="evidence" value="ECO:0000318"/>
    <property type="project" value="GO_Central"/>
</dbReference>
<dbReference type="GO" id="GO:0034399">
    <property type="term" value="C:nuclear periphery"/>
    <property type="evidence" value="ECO:0007669"/>
    <property type="project" value="EnsemblFungi"/>
</dbReference>
<dbReference type="GO" id="GO:0005524">
    <property type="term" value="F:ATP binding"/>
    <property type="evidence" value="ECO:0007669"/>
    <property type="project" value="UniProtKB-KW"/>
</dbReference>
<dbReference type="GO" id="GO:0004356">
    <property type="term" value="F:glutamine synthetase activity"/>
    <property type="evidence" value="ECO:0000318"/>
    <property type="project" value="GO_Central"/>
</dbReference>
<dbReference type="GO" id="GO:0019676">
    <property type="term" value="P:ammonia assimilation cycle"/>
    <property type="evidence" value="ECO:0007669"/>
    <property type="project" value="EnsemblFungi"/>
</dbReference>
<dbReference type="GO" id="GO:0006542">
    <property type="term" value="P:glutamine biosynthetic process"/>
    <property type="evidence" value="ECO:0000318"/>
    <property type="project" value="GO_Central"/>
</dbReference>
<dbReference type="FunFam" id="3.10.20.70:FF:000004">
    <property type="entry name" value="Glutamine synthetase"/>
    <property type="match status" value="1"/>
</dbReference>
<dbReference type="FunFam" id="3.30.590.10:FF:000004">
    <property type="entry name" value="Glutamine synthetase"/>
    <property type="match status" value="1"/>
</dbReference>
<dbReference type="Gene3D" id="3.10.20.70">
    <property type="entry name" value="Glutamine synthetase, N-terminal domain"/>
    <property type="match status" value="1"/>
</dbReference>
<dbReference type="Gene3D" id="3.30.590.10">
    <property type="entry name" value="Glutamine synthetase/guanido kinase, catalytic domain"/>
    <property type="match status" value="1"/>
</dbReference>
<dbReference type="InterPro" id="IPR008147">
    <property type="entry name" value="Gln_synt_N"/>
</dbReference>
<dbReference type="InterPro" id="IPR036651">
    <property type="entry name" value="Gln_synt_N_sf"/>
</dbReference>
<dbReference type="InterPro" id="IPR014746">
    <property type="entry name" value="Gln_synth/guanido_kin_cat_dom"/>
</dbReference>
<dbReference type="InterPro" id="IPR008146">
    <property type="entry name" value="Gln_synth_cat_dom"/>
</dbReference>
<dbReference type="InterPro" id="IPR027303">
    <property type="entry name" value="Gln_synth_gly_rich_site"/>
</dbReference>
<dbReference type="InterPro" id="IPR027302">
    <property type="entry name" value="Gln_synth_N_conserv_site"/>
</dbReference>
<dbReference type="InterPro" id="IPR050292">
    <property type="entry name" value="Glutamine_Synthetase"/>
</dbReference>
<dbReference type="PANTHER" id="PTHR20852">
    <property type="entry name" value="GLUTAMINE SYNTHETASE"/>
    <property type="match status" value="1"/>
</dbReference>
<dbReference type="PANTHER" id="PTHR20852:SF57">
    <property type="entry name" value="GLUTAMINE SYNTHETASE 2 CYTOPLASMIC"/>
    <property type="match status" value="1"/>
</dbReference>
<dbReference type="Pfam" id="PF00120">
    <property type="entry name" value="Gln-synt_C"/>
    <property type="match status" value="1"/>
</dbReference>
<dbReference type="Pfam" id="PF03951">
    <property type="entry name" value="Gln-synt_N"/>
    <property type="match status" value="1"/>
</dbReference>
<dbReference type="SMART" id="SM01230">
    <property type="entry name" value="Gln-synt_C"/>
    <property type="match status" value="1"/>
</dbReference>
<dbReference type="SUPFAM" id="SSF54368">
    <property type="entry name" value="Glutamine synthetase, N-terminal domain"/>
    <property type="match status" value="1"/>
</dbReference>
<dbReference type="SUPFAM" id="SSF55931">
    <property type="entry name" value="Glutamine synthetase/guanido kinase"/>
    <property type="match status" value="1"/>
</dbReference>
<dbReference type="PROSITE" id="PS00180">
    <property type="entry name" value="GLNA_1"/>
    <property type="match status" value="1"/>
</dbReference>
<dbReference type="PROSITE" id="PS00181">
    <property type="entry name" value="GLNA_ATP"/>
    <property type="match status" value="1"/>
</dbReference>
<dbReference type="PROSITE" id="PS51986">
    <property type="entry name" value="GS_BETA_GRASP"/>
    <property type="match status" value="1"/>
</dbReference>
<dbReference type="PROSITE" id="PS51987">
    <property type="entry name" value="GS_CATALYTIC"/>
    <property type="match status" value="1"/>
</dbReference>
<evidence type="ECO:0000250" key="1"/>
<evidence type="ECO:0000255" key="2">
    <source>
        <dbReference type="PROSITE-ProRule" id="PRU01330"/>
    </source>
</evidence>
<evidence type="ECO:0000255" key="3">
    <source>
        <dbReference type="PROSITE-ProRule" id="PRU01331"/>
    </source>
</evidence>
<evidence type="ECO:0000305" key="4"/>
<reference key="1">
    <citation type="journal article" date="2004" name="Science">
        <title>The Ashbya gossypii genome as a tool for mapping the ancient Saccharomyces cerevisiae genome.</title>
        <authorList>
            <person name="Dietrich F.S."/>
            <person name="Voegeli S."/>
            <person name="Brachat S."/>
            <person name="Lerch A."/>
            <person name="Gates K."/>
            <person name="Steiner S."/>
            <person name="Mohr C."/>
            <person name="Poehlmann R."/>
            <person name="Luedi P."/>
            <person name="Choi S."/>
            <person name="Wing R.A."/>
            <person name="Flavier A."/>
            <person name="Gaffney T.D."/>
            <person name="Philippsen P."/>
        </authorList>
    </citation>
    <scope>NUCLEOTIDE SEQUENCE [LARGE SCALE GENOMIC DNA]</scope>
    <source>
        <strain>ATCC 10895 / CBS 109.51 / FGSC 9923 / NRRL Y-1056</strain>
    </source>
</reference>
<reference key="2">
    <citation type="journal article" date="2013" name="G3 (Bethesda)">
        <title>Genomes of Ashbya fungi isolated from insects reveal four mating-type loci, numerous translocations, lack of transposons, and distinct gene duplications.</title>
        <authorList>
            <person name="Dietrich F.S."/>
            <person name="Voegeli S."/>
            <person name="Kuo S."/>
            <person name="Philippsen P."/>
        </authorList>
    </citation>
    <scope>GENOME REANNOTATION</scope>
    <source>
        <strain>ATCC 10895 / CBS 109.51 / FGSC 9923 / NRRL Y-1056</strain>
    </source>
</reference>
<gene>
    <name type="primary">GLN1</name>
    <name type="ordered locus">ACR182C</name>
</gene>
<protein>
    <recommendedName>
        <fullName>Glutamine synthetase</fullName>
        <shortName>GS</shortName>
        <ecNumber>6.3.1.2</ecNumber>
    </recommendedName>
    <alternativeName>
        <fullName>Glutamate--ammonia ligase</fullName>
    </alternativeName>
</protein>
<sequence length="369" mass="41463">MSELVEKTSTLLKYLDLDQRGAVIAEYIWVDSAGHLRSKGRTLQRRVESVDELPEWNFDGSSTGQAPGHDSDVYLKPVAFYPDPFRRGDNIIVLAECWNNDGTPNKYNHRHEAAKLFEAHRAADIWFGLEQEYTLFDHNDNVYGWPKGGFPAPQGPYYCGVGAGKVYARDVVEAHYRACLYAGLRISGINAEVMPSQWEFQVGPCTGITMGDELWVGRYLLHRVAEEFGVKVSFHPKPLKGDWNGAGCHTNVSTREMRQPGGMRYIEEAIDKLSKRHKEHIKLYGSDNELRLTGRHETASMATFSSGVANRGASIRIPRSVSKEGFGYFEDRRPASNIDPYLVTGIICETICGAIENADMSKEFERESS</sequence>
<keyword id="KW-0067">ATP-binding</keyword>
<keyword id="KW-0963">Cytoplasm</keyword>
<keyword id="KW-0436">Ligase</keyword>
<keyword id="KW-0547">Nucleotide-binding</keyword>
<keyword id="KW-1185">Reference proteome</keyword>
<organism>
    <name type="scientific">Eremothecium gossypii (strain ATCC 10895 / CBS 109.51 / FGSC 9923 / NRRL Y-1056)</name>
    <name type="common">Yeast</name>
    <name type="synonym">Ashbya gossypii</name>
    <dbReference type="NCBI Taxonomy" id="284811"/>
    <lineage>
        <taxon>Eukaryota</taxon>
        <taxon>Fungi</taxon>
        <taxon>Dikarya</taxon>
        <taxon>Ascomycota</taxon>
        <taxon>Saccharomycotina</taxon>
        <taxon>Saccharomycetes</taxon>
        <taxon>Saccharomycetales</taxon>
        <taxon>Saccharomycetaceae</taxon>
        <taxon>Eremothecium</taxon>
    </lineage>
</organism>
<feature type="chain" id="PRO_0000153151" description="Glutamine synthetase">
    <location>
        <begin position="1"/>
        <end position="369"/>
    </location>
</feature>
<feature type="domain" description="GS beta-grasp" evidence="2">
    <location>
        <begin position="23"/>
        <end position="102"/>
    </location>
</feature>
<feature type="domain" description="GS catalytic" evidence="3">
    <location>
        <begin position="109"/>
        <end position="369"/>
    </location>
</feature>